<proteinExistence type="evidence at protein level"/>
<gene>
    <name evidence="8" type="primary">CRK36</name>
    <name type="ordered locus">At4g04490</name>
    <name type="ORF">T26N6.10</name>
</gene>
<name>CRK36_ARATH</name>
<comment type="function">
    <text>Forms a complex with CRK45 that may negatively control abscisic acid (ABA) and osmotic stress signal transduction. Can phosphorylate CRK45 in vitro (PubMed:22225700).</text>
</comment>
<comment type="catalytic activity">
    <reaction evidence="7">
        <text>L-seryl-[protein] + ATP = O-phospho-L-seryl-[protein] + ADP + H(+)</text>
        <dbReference type="Rhea" id="RHEA:17989"/>
        <dbReference type="Rhea" id="RHEA-COMP:9863"/>
        <dbReference type="Rhea" id="RHEA-COMP:11604"/>
        <dbReference type="ChEBI" id="CHEBI:15378"/>
        <dbReference type="ChEBI" id="CHEBI:29999"/>
        <dbReference type="ChEBI" id="CHEBI:30616"/>
        <dbReference type="ChEBI" id="CHEBI:83421"/>
        <dbReference type="ChEBI" id="CHEBI:456216"/>
        <dbReference type="EC" id="2.7.11.1"/>
    </reaction>
</comment>
<comment type="catalytic activity">
    <reaction evidence="7">
        <text>L-threonyl-[protein] + ATP = O-phospho-L-threonyl-[protein] + ADP + H(+)</text>
        <dbReference type="Rhea" id="RHEA:46608"/>
        <dbReference type="Rhea" id="RHEA-COMP:11060"/>
        <dbReference type="Rhea" id="RHEA-COMP:11605"/>
        <dbReference type="ChEBI" id="CHEBI:15378"/>
        <dbReference type="ChEBI" id="CHEBI:30013"/>
        <dbReference type="ChEBI" id="CHEBI:30616"/>
        <dbReference type="ChEBI" id="CHEBI:61977"/>
        <dbReference type="ChEBI" id="CHEBI:456216"/>
        <dbReference type="EC" id="2.7.11.1"/>
    </reaction>
</comment>
<comment type="subunit">
    <text evidence="7">Interacts with CRK45.</text>
</comment>
<comment type="subcellular location">
    <subcellularLocation>
        <location evidence="7">Cell membrane</location>
        <topology evidence="2">Single-pass membrane protein</topology>
    </subcellularLocation>
</comment>
<comment type="induction">
    <text evidence="6 7">By ozone and light stress (PubMed:20500828). Induced by salt stress, drought stress and abscisic acid (ABA) (PubMed:22225700).</text>
</comment>
<comment type="PTM">
    <text evidence="7">Autophosphorylated.</text>
</comment>
<comment type="miscellaneous">
    <text evidence="7">Seedlings silencing CRK36 show increased sensitivity to abscisic acid (ABA) and salt stress during post-germinative growth.</text>
</comment>
<comment type="similarity">
    <text evidence="3">Belongs to the protein kinase superfamily. Ser/Thr protein kinase family. CRK subfamily.</text>
</comment>
<reference key="1">
    <citation type="journal article" date="1999" name="Nature">
        <title>Sequence and analysis of chromosome 4 of the plant Arabidopsis thaliana.</title>
        <authorList>
            <person name="Mayer K.F.X."/>
            <person name="Schueller C."/>
            <person name="Wambutt R."/>
            <person name="Murphy G."/>
            <person name="Volckaert G."/>
            <person name="Pohl T."/>
            <person name="Duesterhoeft A."/>
            <person name="Stiekema W."/>
            <person name="Entian K.-D."/>
            <person name="Terryn N."/>
            <person name="Harris B."/>
            <person name="Ansorge W."/>
            <person name="Brandt P."/>
            <person name="Grivell L.A."/>
            <person name="Rieger M."/>
            <person name="Weichselgartner M."/>
            <person name="de Simone V."/>
            <person name="Obermaier B."/>
            <person name="Mache R."/>
            <person name="Mueller M."/>
            <person name="Kreis M."/>
            <person name="Delseny M."/>
            <person name="Puigdomenech P."/>
            <person name="Watson M."/>
            <person name="Schmidtheini T."/>
            <person name="Reichert B."/>
            <person name="Portetelle D."/>
            <person name="Perez-Alonso M."/>
            <person name="Boutry M."/>
            <person name="Bancroft I."/>
            <person name="Vos P."/>
            <person name="Hoheisel J."/>
            <person name="Zimmermann W."/>
            <person name="Wedler H."/>
            <person name="Ridley P."/>
            <person name="Langham S.-A."/>
            <person name="McCullagh B."/>
            <person name="Bilham L."/>
            <person name="Robben J."/>
            <person name="van der Schueren J."/>
            <person name="Grymonprez B."/>
            <person name="Chuang Y.-J."/>
            <person name="Vandenbussche F."/>
            <person name="Braeken M."/>
            <person name="Weltjens I."/>
            <person name="Voet M."/>
            <person name="Bastiaens I."/>
            <person name="Aert R."/>
            <person name="Defoor E."/>
            <person name="Weitzenegger T."/>
            <person name="Bothe G."/>
            <person name="Ramsperger U."/>
            <person name="Hilbert H."/>
            <person name="Braun M."/>
            <person name="Holzer E."/>
            <person name="Brandt A."/>
            <person name="Peters S."/>
            <person name="van Staveren M."/>
            <person name="Dirkse W."/>
            <person name="Mooijman P."/>
            <person name="Klein Lankhorst R."/>
            <person name="Rose M."/>
            <person name="Hauf J."/>
            <person name="Koetter P."/>
            <person name="Berneiser S."/>
            <person name="Hempel S."/>
            <person name="Feldpausch M."/>
            <person name="Lamberth S."/>
            <person name="Van den Daele H."/>
            <person name="De Keyser A."/>
            <person name="Buysshaert C."/>
            <person name="Gielen J."/>
            <person name="Villarroel R."/>
            <person name="De Clercq R."/>
            <person name="van Montagu M."/>
            <person name="Rogers J."/>
            <person name="Cronin A."/>
            <person name="Quail M.A."/>
            <person name="Bray-Allen S."/>
            <person name="Clark L."/>
            <person name="Doggett J."/>
            <person name="Hall S."/>
            <person name="Kay M."/>
            <person name="Lennard N."/>
            <person name="McLay K."/>
            <person name="Mayes R."/>
            <person name="Pettett A."/>
            <person name="Rajandream M.A."/>
            <person name="Lyne M."/>
            <person name="Benes V."/>
            <person name="Rechmann S."/>
            <person name="Borkova D."/>
            <person name="Bloecker H."/>
            <person name="Scharfe M."/>
            <person name="Grimm M."/>
            <person name="Loehnert T.-H."/>
            <person name="Dose S."/>
            <person name="de Haan M."/>
            <person name="Maarse A.C."/>
            <person name="Schaefer M."/>
            <person name="Mueller-Auer S."/>
            <person name="Gabel C."/>
            <person name="Fuchs M."/>
            <person name="Fartmann B."/>
            <person name="Granderath K."/>
            <person name="Dauner D."/>
            <person name="Herzl A."/>
            <person name="Neumann S."/>
            <person name="Argiriou A."/>
            <person name="Vitale D."/>
            <person name="Liguori R."/>
            <person name="Piravandi E."/>
            <person name="Massenet O."/>
            <person name="Quigley F."/>
            <person name="Clabauld G."/>
            <person name="Muendlein A."/>
            <person name="Felber R."/>
            <person name="Schnabl S."/>
            <person name="Hiller R."/>
            <person name="Schmidt W."/>
            <person name="Lecharny A."/>
            <person name="Aubourg S."/>
            <person name="Chefdor F."/>
            <person name="Cooke R."/>
            <person name="Berger C."/>
            <person name="Monfort A."/>
            <person name="Casacuberta E."/>
            <person name="Gibbons T."/>
            <person name="Weber N."/>
            <person name="Vandenbol M."/>
            <person name="Bargues M."/>
            <person name="Terol J."/>
            <person name="Torres A."/>
            <person name="Perez-Perez A."/>
            <person name="Purnelle B."/>
            <person name="Bent E."/>
            <person name="Johnson S."/>
            <person name="Tacon D."/>
            <person name="Jesse T."/>
            <person name="Heijnen L."/>
            <person name="Schwarz S."/>
            <person name="Scholler P."/>
            <person name="Heber S."/>
            <person name="Francs P."/>
            <person name="Bielke C."/>
            <person name="Frishman D."/>
            <person name="Haase D."/>
            <person name="Lemcke K."/>
            <person name="Mewes H.-W."/>
            <person name="Stocker S."/>
            <person name="Zaccaria P."/>
            <person name="Bevan M."/>
            <person name="Wilson R.K."/>
            <person name="de la Bastide M."/>
            <person name="Habermann K."/>
            <person name="Parnell L."/>
            <person name="Dedhia N."/>
            <person name="Gnoj L."/>
            <person name="Schutz K."/>
            <person name="Huang E."/>
            <person name="Spiegel L."/>
            <person name="Sekhon M."/>
            <person name="Murray J."/>
            <person name="Sheet P."/>
            <person name="Cordes M."/>
            <person name="Abu-Threideh J."/>
            <person name="Stoneking T."/>
            <person name="Kalicki J."/>
            <person name="Graves T."/>
            <person name="Harmon G."/>
            <person name="Edwards J."/>
            <person name="Latreille P."/>
            <person name="Courtney L."/>
            <person name="Cloud J."/>
            <person name="Abbott A."/>
            <person name="Scott K."/>
            <person name="Johnson D."/>
            <person name="Minx P."/>
            <person name="Bentley D."/>
            <person name="Fulton B."/>
            <person name="Miller N."/>
            <person name="Greco T."/>
            <person name="Kemp K."/>
            <person name="Kramer J."/>
            <person name="Fulton L."/>
            <person name="Mardis E."/>
            <person name="Dante M."/>
            <person name="Pepin K."/>
            <person name="Hillier L.W."/>
            <person name="Nelson J."/>
            <person name="Spieth J."/>
            <person name="Ryan E."/>
            <person name="Andrews S."/>
            <person name="Geisel C."/>
            <person name="Layman D."/>
            <person name="Du H."/>
            <person name="Ali J."/>
            <person name="Berghoff A."/>
            <person name="Jones K."/>
            <person name="Drone K."/>
            <person name="Cotton M."/>
            <person name="Joshu C."/>
            <person name="Antonoiu B."/>
            <person name="Zidanic M."/>
            <person name="Strong C."/>
            <person name="Sun H."/>
            <person name="Lamar B."/>
            <person name="Yordan C."/>
            <person name="Ma P."/>
            <person name="Zhong J."/>
            <person name="Preston R."/>
            <person name="Vil D."/>
            <person name="Shekher M."/>
            <person name="Matero A."/>
            <person name="Shah R."/>
            <person name="Swaby I.K."/>
            <person name="O'Shaughnessy A."/>
            <person name="Rodriguez M."/>
            <person name="Hoffman J."/>
            <person name="Till S."/>
            <person name="Granat S."/>
            <person name="Shohdy N."/>
            <person name="Hasegawa A."/>
            <person name="Hameed A."/>
            <person name="Lodhi M."/>
            <person name="Johnson A."/>
            <person name="Chen E."/>
            <person name="Marra M.A."/>
            <person name="Martienssen R."/>
            <person name="McCombie W.R."/>
        </authorList>
    </citation>
    <scope>NUCLEOTIDE SEQUENCE [LARGE SCALE GENOMIC DNA]</scope>
    <source>
        <strain>cv. Columbia</strain>
    </source>
</reference>
<reference key="2">
    <citation type="journal article" date="2017" name="Plant J.">
        <title>Araport11: a complete reannotation of the Arabidopsis thaliana reference genome.</title>
        <authorList>
            <person name="Cheng C.Y."/>
            <person name="Krishnakumar V."/>
            <person name="Chan A.P."/>
            <person name="Thibaud-Nissen F."/>
            <person name="Schobel S."/>
            <person name="Town C.D."/>
        </authorList>
    </citation>
    <scope>GENOME REANNOTATION</scope>
    <source>
        <strain>cv. Columbia</strain>
    </source>
</reference>
<reference key="3">
    <citation type="journal article" date="2001" name="Plant Physiol.">
        <title>A superfamily of proteins with novel cysteine-rich repeats.</title>
        <authorList>
            <person name="Chen Z."/>
        </authorList>
    </citation>
    <scope>GENE FAMILY ORGANIZATION</scope>
    <scope>NOMENCLATURE</scope>
</reference>
<reference key="4">
    <citation type="journal article" date="2010" name="BMC Plant Biol.">
        <title>Transcriptional regulation of the CRK/DUF26 group of receptor-like protein kinases by ozone and plant hormones in Arabidopsis.</title>
        <authorList>
            <person name="Wrzaczek M."/>
            <person name="Brosche M."/>
            <person name="Salojarvi J."/>
            <person name="Kangasjarvi S."/>
            <person name="Idanheimo N."/>
            <person name="Mersmann S."/>
            <person name="Robatzek S."/>
            <person name="Karpinski S."/>
            <person name="Karpinska B."/>
            <person name="Kangasjarvi J."/>
        </authorList>
    </citation>
    <scope>INDUCTION</scope>
</reference>
<reference key="5">
    <citation type="journal article" date="2012" name="Plant J.">
        <title>Abiotic stress-inducible receptor-like kinases negatively control ABA signaling in Arabidopsis.</title>
        <authorList>
            <person name="Tanaka H."/>
            <person name="Osakabe Y."/>
            <person name="Katsura S."/>
            <person name="Mizuno S."/>
            <person name="Maruyama K."/>
            <person name="Kusakabe K."/>
            <person name="Mizoi J."/>
            <person name="Shinozaki K."/>
            <person name="Yamaguchi-Shinozaki K."/>
        </authorList>
    </citation>
    <scope>FUNCTION</scope>
    <scope>CATALYTIC ACTIVITY</scope>
    <scope>INTERACTION WITH CRK45</scope>
    <scope>SUBCELLULAR LOCATION</scope>
    <scope>INDUCTION</scope>
    <scope>AUTOPHOSPHORYLATION</scope>
    <scope>MUTAGENESIS OF LYS-368</scope>
</reference>
<accession>Q9XEC6</accession>
<keyword id="KW-0067">ATP-binding</keyword>
<keyword id="KW-1003">Cell membrane</keyword>
<keyword id="KW-0325">Glycoprotein</keyword>
<keyword id="KW-0418">Kinase</keyword>
<keyword id="KW-0472">Membrane</keyword>
<keyword id="KW-0547">Nucleotide-binding</keyword>
<keyword id="KW-0597">Phosphoprotein</keyword>
<keyword id="KW-0675">Receptor</keyword>
<keyword id="KW-1185">Reference proteome</keyword>
<keyword id="KW-0677">Repeat</keyword>
<keyword id="KW-0723">Serine/threonine-protein kinase</keyword>
<keyword id="KW-0732">Signal</keyword>
<keyword id="KW-0346">Stress response</keyword>
<keyword id="KW-0808">Transferase</keyword>
<keyword id="KW-0812">Transmembrane</keyword>
<keyword id="KW-1133">Transmembrane helix</keyword>
<evidence type="ECO:0000250" key="1">
    <source>
        <dbReference type="UniProtKB" id="O48814"/>
    </source>
</evidence>
<evidence type="ECO:0000255" key="2"/>
<evidence type="ECO:0000255" key="3">
    <source>
        <dbReference type="PROSITE-ProRule" id="PRU00159"/>
    </source>
</evidence>
<evidence type="ECO:0000255" key="4">
    <source>
        <dbReference type="PROSITE-ProRule" id="PRU00806"/>
    </source>
</evidence>
<evidence type="ECO:0000255" key="5">
    <source>
        <dbReference type="PROSITE-ProRule" id="PRU10027"/>
    </source>
</evidence>
<evidence type="ECO:0000269" key="6">
    <source>
    </source>
</evidence>
<evidence type="ECO:0000269" key="7">
    <source>
    </source>
</evidence>
<evidence type="ECO:0000303" key="8">
    <source>
    </source>
</evidence>
<evidence type="ECO:0000305" key="9"/>
<organism>
    <name type="scientific">Arabidopsis thaliana</name>
    <name type="common">Mouse-ear cress</name>
    <dbReference type="NCBI Taxonomy" id="3702"/>
    <lineage>
        <taxon>Eukaryota</taxon>
        <taxon>Viridiplantae</taxon>
        <taxon>Streptophyta</taxon>
        <taxon>Embryophyta</taxon>
        <taxon>Tracheophyta</taxon>
        <taxon>Spermatophyta</taxon>
        <taxon>Magnoliopsida</taxon>
        <taxon>eudicotyledons</taxon>
        <taxon>Gunneridae</taxon>
        <taxon>Pentapetalae</taxon>
        <taxon>rosids</taxon>
        <taxon>malvids</taxon>
        <taxon>Brassicales</taxon>
        <taxon>Brassicaceae</taxon>
        <taxon>Camelineae</taxon>
        <taxon>Arabidopsis</taxon>
    </lineage>
</organism>
<feature type="signal peptide" evidence="2">
    <location>
        <begin position="1"/>
        <end position="26"/>
    </location>
</feature>
<feature type="chain" id="PRO_0000295083" description="Cysteine-rich receptor-like protein kinase 36">
    <location>
        <begin position="27"/>
        <end position="658"/>
    </location>
</feature>
<feature type="topological domain" description="Extracellular" evidence="2">
    <location>
        <begin position="27"/>
        <end position="281"/>
    </location>
</feature>
<feature type="transmembrane region" description="Helical" evidence="2">
    <location>
        <begin position="282"/>
        <end position="302"/>
    </location>
</feature>
<feature type="topological domain" description="Cytoplasmic" evidence="2">
    <location>
        <begin position="303"/>
        <end position="658"/>
    </location>
</feature>
<feature type="domain" description="Gnk2-homologous 1" evidence="4">
    <location>
        <begin position="27"/>
        <end position="128"/>
    </location>
</feature>
<feature type="domain" description="Gnk2-homologous 2" evidence="4">
    <location>
        <begin position="139"/>
        <end position="246"/>
    </location>
</feature>
<feature type="domain" description="Protein kinase" evidence="3">
    <location>
        <begin position="340"/>
        <end position="612"/>
    </location>
</feature>
<feature type="active site" description="Proton acceptor" evidence="3 5">
    <location>
        <position position="465"/>
    </location>
</feature>
<feature type="binding site" evidence="3">
    <location>
        <begin position="346"/>
        <end position="354"/>
    </location>
    <ligand>
        <name>ATP</name>
        <dbReference type="ChEBI" id="CHEBI:30616"/>
    </ligand>
</feature>
<feature type="binding site" evidence="3">
    <location>
        <position position="368"/>
    </location>
    <ligand>
        <name>ATP</name>
        <dbReference type="ChEBI" id="CHEBI:30616"/>
    </ligand>
</feature>
<feature type="modified residue" description="Phosphotyrosine" evidence="1">
    <location>
        <position position="413"/>
    </location>
</feature>
<feature type="modified residue" description="Phosphoserine" evidence="1">
    <location>
        <position position="469"/>
    </location>
</feature>
<feature type="modified residue" description="Phosphothreonine" evidence="1">
    <location>
        <position position="505"/>
    </location>
</feature>
<feature type="modified residue" description="Phosphotyrosine" evidence="1">
    <location>
        <position position="513"/>
    </location>
</feature>
<feature type="glycosylation site" description="N-linked (GlcNAc...) asparagine" evidence="2">
    <location>
        <position position="38"/>
    </location>
</feature>
<feature type="glycosylation site" description="N-linked (GlcNAc...) asparagine" evidence="2">
    <location>
        <position position="64"/>
    </location>
</feature>
<feature type="glycosylation site" description="N-linked (GlcNAc...) asparagine" evidence="2">
    <location>
        <position position="116"/>
    </location>
</feature>
<feature type="glycosylation site" description="N-linked (GlcNAc...) asparagine" evidence="2">
    <location>
        <position position="150"/>
    </location>
</feature>
<feature type="glycosylation site" description="N-linked (GlcNAc...) asparagine" evidence="2">
    <location>
        <position position="163"/>
    </location>
</feature>
<feature type="mutagenesis site" description="Loss of function." evidence="7">
    <original>K</original>
    <variation>E</variation>
    <location>
        <position position="368"/>
    </location>
</feature>
<dbReference type="EC" id="2.7.11.1" evidence="7"/>
<dbReference type="EMBL" id="AF076243">
    <property type="protein sequence ID" value="AAD29761.1"/>
    <property type="molecule type" value="Genomic_DNA"/>
</dbReference>
<dbReference type="EMBL" id="AL161500">
    <property type="protein sequence ID" value="CAB77917.1"/>
    <property type="molecule type" value="Genomic_DNA"/>
</dbReference>
<dbReference type="EMBL" id="CP002687">
    <property type="protein sequence ID" value="AEE82394.1"/>
    <property type="molecule type" value="Genomic_DNA"/>
</dbReference>
<dbReference type="RefSeq" id="NP_192358.1">
    <property type="nucleotide sequence ID" value="NM_116687.2"/>
</dbReference>
<dbReference type="SMR" id="Q9XEC6"/>
<dbReference type="BioGRID" id="11090">
    <property type="interactions" value="2"/>
</dbReference>
<dbReference type="FunCoup" id="Q9XEC6">
    <property type="interactions" value="48"/>
</dbReference>
<dbReference type="STRING" id="3702.Q9XEC6"/>
<dbReference type="GlyCosmos" id="Q9XEC6">
    <property type="glycosylation" value="5 sites, No reported glycans"/>
</dbReference>
<dbReference type="GlyGen" id="Q9XEC6">
    <property type="glycosylation" value="5 sites"/>
</dbReference>
<dbReference type="PaxDb" id="3702-AT4G04490.1"/>
<dbReference type="ProteomicsDB" id="224416"/>
<dbReference type="EnsemblPlants" id="AT4G04490.1">
    <property type="protein sequence ID" value="AT4G04490.1"/>
    <property type="gene ID" value="AT4G04490"/>
</dbReference>
<dbReference type="GeneID" id="825779"/>
<dbReference type="Gramene" id="AT4G04490.1">
    <property type="protein sequence ID" value="AT4G04490.1"/>
    <property type="gene ID" value="AT4G04490"/>
</dbReference>
<dbReference type="KEGG" id="ath:AT4G04490"/>
<dbReference type="Araport" id="AT4G04490"/>
<dbReference type="TAIR" id="AT4G04490">
    <property type="gene designation" value="CRK36"/>
</dbReference>
<dbReference type="eggNOG" id="ENOG502SE86">
    <property type="taxonomic scope" value="Eukaryota"/>
</dbReference>
<dbReference type="HOGENOM" id="CLU_000288_35_2_1"/>
<dbReference type="InParanoid" id="Q9XEC6"/>
<dbReference type="OMA" id="ESIIDPY"/>
<dbReference type="PhylomeDB" id="Q9XEC6"/>
<dbReference type="PRO" id="PR:Q9XEC6"/>
<dbReference type="Proteomes" id="UP000006548">
    <property type="component" value="Chromosome 4"/>
</dbReference>
<dbReference type="ExpressionAtlas" id="Q9XEC6">
    <property type="expression patterns" value="baseline and differential"/>
</dbReference>
<dbReference type="GO" id="GO:0005886">
    <property type="term" value="C:plasma membrane"/>
    <property type="evidence" value="ECO:0000314"/>
    <property type="project" value="TAIR"/>
</dbReference>
<dbReference type="GO" id="GO:0005524">
    <property type="term" value="F:ATP binding"/>
    <property type="evidence" value="ECO:0007669"/>
    <property type="project" value="UniProtKB-KW"/>
</dbReference>
<dbReference type="GO" id="GO:0106310">
    <property type="term" value="F:protein serine kinase activity"/>
    <property type="evidence" value="ECO:0007669"/>
    <property type="project" value="RHEA"/>
</dbReference>
<dbReference type="GO" id="GO:0004674">
    <property type="term" value="F:protein serine/threonine kinase activity"/>
    <property type="evidence" value="ECO:0000314"/>
    <property type="project" value="TAIR"/>
</dbReference>
<dbReference type="GO" id="GO:0009737">
    <property type="term" value="P:response to abscisic acid"/>
    <property type="evidence" value="ECO:0000315"/>
    <property type="project" value="TAIR"/>
</dbReference>
<dbReference type="CDD" id="cd23509">
    <property type="entry name" value="Gnk2-like"/>
    <property type="match status" value="2"/>
</dbReference>
<dbReference type="CDD" id="cd14066">
    <property type="entry name" value="STKc_IRAK"/>
    <property type="match status" value="1"/>
</dbReference>
<dbReference type="FunFam" id="3.30.200.20:FF:000142">
    <property type="entry name" value="Cysteine-rich receptor-like protein kinase 10"/>
    <property type="match status" value="1"/>
</dbReference>
<dbReference type="FunFam" id="3.30.430.20:FF:000007">
    <property type="entry name" value="Cysteine-rich receptor-like protein kinase 11"/>
    <property type="match status" value="1"/>
</dbReference>
<dbReference type="FunFam" id="1.10.510.10:FF:000343">
    <property type="entry name" value="Cysteine-rich receptor-like protein kinase 28"/>
    <property type="match status" value="1"/>
</dbReference>
<dbReference type="Gene3D" id="3.30.430.20">
    <property type="entry name" value="Gnk2 domain, C-X8-C-X2-C motif"/>
    <property type="match status" value="2"/>
</dbReference>
<dbReference type="Gene3D" id="3.30.200.20">
    <property type="entry name" value="Phosphorylase Kinase, domain 1"/>
    <property type="match status" value="1"/>
</dbReference>
<dbReference type="Gene3D" id="1.10.510.10">
    <property type="entry name" value="Transferase(Phosphotransferase) domain 1"/>
    <property type="match status" value="1"/>
</dbReference>
<dbReference type="InterPro" id="IPR002902">
    <property type="entry name" value="GNK2"/>
</dbReference>
<dbReference type="InterPro" id="IPR038408">
    <property type="entry name" value="GNK2_sf"/>
</dbReference>
<dbReference type="InterPro" id="IPR011009">
    <property type="entry name" value="Kinase-like_dom_sf"/>
</dbReference>
<dbReference type="InterPro" id="IPR000719">
    <property type="entry name" value="Prot_kinase_dom"/>
</dbReference>
<dbReference type="InterPro" id="IPR017441">
    <property type="entry name" value="Protein_kinase_ATP_BS"/>
</dbReference>
<dbReference type="InterPro" id="IPR001245">
    <property type="entry name" value="Ser-Thr/Tyr_kinase_cat_dom"/>
</dbReference>
<dbReference type="InterPro" id="IPR008271">
    <property type="entry name" value="Ser/Thr_kinase_AS"/>
</dbReference>
<dbReference type="PANTHER" id="PTHR27002:SF1094">
    <property type="entry name" value="CYSTEINE-RICH RECEPTOR-LIKE PROTEIN KINASE 36"/>
    <property type="match status" value="1"/>
</dbReference>
<dbReference type="PANTHER" id="PTHR27002">
    <property type="entry name" value="RECEPTOR-LIKE SERINE/THREONINE-PROTEIN KINASE SD1-8"/>
    <property type="match status" value="1"/>
</dbReference>
<dbReference type="Pfam" id="PF07714">
    <property type="entry name" value="PK_Tyr_Ser-Thr"/>
    <property type="match status" value="1"/>
</dbReference>
<dbReference type="Pfam" id="PF01657">
    <property type="entry name" value="Stress-antifung"/>
    <property type="match status" value="2"/>
</dbReference>
<dbReference type="SMART" id="SM00220">
    <property type="entry name" value="S_TKc"/>
    <property type="match status" value="1"/>
</dbReference>
<dbReference type="SUPFAM" id="SSF56112">
    <property type="entry name" value="Protein kinase-like (PK-like)"/>
    <property type="match status" value="1"/>
</dbReference>
<dbReference type="PROSITE" id="PS51473">
    <property type="entry name" value="GNK2"/>
    <property type="match status" value="2"/>
</dbReference>
<dbReference type="PROSITE" id="PS00107">
    <property type="entry name" value="PROTEIN_KINASE_ATP"/>
    <property type="match status" value="1"/>
</dbReference>
<dbReference type="PROSITE" id="PS50011">
    <property type="entry name" value="PROTEIN_KINASE_DOM"/>
    <property type="match status" value="1"/>
</dbReference>
<dbReference type="PROSITE" id="PS00108">
    <property type="entry name" value="PROTEIN_KINASE_ST"/>
    <property type="match status" value="1"/>
</dbReference>
<sequence length="658" mass="74978">MERSNLFHIPCFLLLFLLFNINGVHTTFVCGDEDFSPNTSYVENLESLLPSLASNVIRERGFYNVSLDGVYALALCRKHYEVQACRRCVDRASRTLLTQCRGKTEAYHWDSENDANVSCLVRYSNIHRFGKLKLEPIGNVPHSSLDPSSNLTRISQEFAARANRTVEVASTADESSVLKYYGVSSAEFTDTPEVNMLMQCTPDLSSSDCNHCLRENVRYNQEHNWDRVGGTVARPSCYFRWDDYRFAGAFDNLERVPAPPRSPQTRQDYRVKKGRMFQPWSVVVVVFPTGINLAVFVAFVLAYRRMRRRIYTEINKNSDSDGQATLRFDLGMILIATNEFSLENKLGQGGFGSVYKGILPSGQEIAVKRLAGGSGQGELEFKNEVLLLTRLQHRNLVKLLGFCNEGNEEILVYEHVPNSSLDHFIFDEDKRWLLTWDVRYRIIEGVARGLLYLHEDSQLRIIHRDLKASNILLDAEMNPKVADFGMARLFNMDETRGETSRVVGTYGYMAPEYVRHGQFSAKSDVYSFGVMLLEMISGEKNKNFETEGLPAFAWKRWIEGELESIIDPYLNENPRNEIIKLIQIGLLCVQENAAKRPTMNSVITWLARDGTFTIPKPTEAAFVTLPLSVKPENRSMSERKDKDPFSVDEVSITVLYPR</sequence>
<protein>
    <recommendedName>
        <fullName evidence="9">Cysteine-rich receptor-like protein kinase 36</fullName>
        <shortName evidence="8">Cysteine-rich RLK36</shortName>
        <ecNumber evidence="7">2.7.11.1</ecNumber>
    </recommendedName>
</protein>